<protein>
    <recommendedName>
        <fullName evidence="1">UPF0178 protein XCC2288</fullName>
    </recommendedName>
</protein>
<feature type="chain" id="PRO_0000176024" description="UPF0178 protein XCC2288">
    <location>
        <begin position="1"/>
        <end position="160"/>
    </location>
</feature>
<sequence length="160" mass="16924">MNTPLPPGLAQIWVDADACPAVIRDILFRAAQRTGIPVTLVANHFLRTPTLAHVRALQVPGGPDAADDAIAERVNAGDLVVTQDIPLAARVLERGAAAVSPRGEPFSSDSIAERLSVRGFLEELRGAGVATGGPPALHARDRQAFAAQLDRWLARQSARS</sequence>
<name>Y2288_XANCP</name>
<accession>Q8P8F4</accession>
<comment type="similarity">
    <text evidence="1">Belongs to the UPF0178 family.</text>
</comment>
<gene>
    <name type="ordered locus">XCC2288</name>
</gene>
<proteinExistence type="inferred from homology"/>
<reference key="1">
    <citation type="journal article" date="2002" name="Nature">
        <title>Comparison of the genomes of two Xanthomonas pathogens with differing host specificities.</title>
        <authorList>
            <person name="da Silva A.C.R."/>
            <person name="Ferro J.A."/>
            <person name="Reinach F.C."/>
            <person name="Farah C.S."/>
            <person name="Furlan L.R."/>
            <person name="Quaggio R.B."/>
            <person name="Monteiro-Vitorello C.B."/>
            <person name="Van Sluys M.A."/>
            <person name="Almeida N.F. Jr."/>
            <person name="Alves L.M.C."/>
            <person name="do Amaral A.M."/>
            <person name="Bertolini M.C."/>
            <person name="Camargo L.E.A."/>
            <person name="Camarotte G."/>
            <person name="Cannavan F."/>
            <person name="Cardozo J."/>
            <person name="Chambergo F."/>
            <person name="Ciapina L.P."/>
            <person name="Cicarelli R.M.B."/>
            <person name="Coutinho L.L."/>
            <person name="Cursino-Santos J.R."/>
            <person name="El-Dorry H."/>
            <person name="Faria J.B."/>
            <person name="Ferreira A.J.S."/>
            <person name="Ferreira R.C.C."/>
            <person name="Ferro M.I.T."/>
            <person name="Formighieri E.F."/>
            <person name="Franco M.C."/>
            <person name="Greggio C.C."/>
            <person name="Gruber A."/>
            <person name="Katsuyama A.M."/>
            <person name="Kishi L.T."/>
            <person name="Leite R.P."/>
            <person name="Lemos E.G.M."/>
            <person name="Lemos M.V.F."/>
            <person name="Locali E.C."/>
            <person name="Machado M.A."/>
            <person name="Madeira A.M.B.N."/>
            <person name="Martinez-Rossi N.M."/>
            <person name="Martins E.C."/>
            <person name="Meidanis J."/>
            <person name="Menck C.F.M."/>
            <person name="Miyaki C.Y."/>
            <person name="Moon D.H."/>
            <person name="Moreira L.M."/>
            <person name="Novo M.T.M."/>
            <person name="Okura V.K."/>
            <person name="Oliveira M.C."/>
            <person name="Oliveira V.R."/>
            <person name="Pereira H.A."/>
            <person name="Rossi A."/>
            <person name="Sena J.A.D."/>
            <person name="Silva C."/>
            <person name="de Souza R.F."/>
            <person name="Spinola L.A.F."/>
            <person name="Takita M.A."/>
            <person name="Tamura R.E."/>
            <person name="Teixeira E.C."/>
            <person name="Tezza R.I.D."/>
            <person name="Trindade dos Santos M."/>
            <person name="Truffi D."/>
            <person name="Tsai S.M."/>
            <person name="White F.F."/>
            <person name="Setubal J.C."/>
            <person name="Kitajima J.P."/>
        </authorList>
    </citation>
    <scope>NUCLEOTIDE SEQUENCE [LARGE SCALE GENOMIC DNA]</scope>
    <source>
        <strain>ATCC 33913 / DSM 3586 / NCPPB 528 / LMG 568 / P 25</strain>
    </source>
</reference>
<organism>
    <name type="scientific">Xanthomonas campestris pv. campestris (strain ATCC 33913 / DSM 3586 / NCPPB 528 / LMG 568 / P 25)</name>
    <dbReference type="NCBI Taxonomy" id="190485"/>
    <lineage>
        <taxon>Bacteria</taxon>
        <taxon>Pseudomonadati</taxon>
        <taxon>Pseudomonadota</taxon>
        <taxon>Gammaproteobacteria</taxon>
        <taxon>Lysobacterales</taxon>
        <taxon>Lysobacteraceae</taxon>
        <taxon>Xanthomonas</taxon>
    </lineage>
</organism>
<keyword id="KW-1185">Reference proteome</keyword>
<dbReference type="EMBL" id="AE008922">
    <property type="protein sequence ID" value="AAM41567.1"/>
    <property type="molecule type" value="Genomic_DNA"/>
</dbReference>
<dbReference type="RefSeq" id="NP_637643.1">
    <property type="nucleotide sequence ID" value="NC_003902.1"/>
</dbReference>
<dbReference type="RefSeq" id="WP_011037432.1">
    <property type="nucleotide sequence ID" value="NC_003902.1"/>
</dbReference>
<dbReference type="STRING" id="190485.XCC2288"/>
<dbReference type="EnsemblBacteria" id="AAM41567">
    <property type="protein sequence ID" value="AAM41567"/>
    <property type="gene ID" value="XCC2288"/>
</dbReference>
<dbReference type="KEGG" id="xcc:XCC2288"/>
<dbReference type="PATRIC" id="fig|190485.4.peg.2438"/>
<dbReference type="eggNOG" id="COG1671">
    <property type="taxonomic scope" value="Bacteria"/>
</dbReference>
<dbReference type="HOGENOM" id="CLU_106619_2_1_6"/>
<dbReference type="OrthoDB" id="9798918at2"/>
<dbReference type="Proteomes" id="UP000001010">
    <property type="component" value="Chromosome"/>
</dbReference>
<dbReference type="CDD" id="cd18720">
    <property type="entry name" value="PIN_YqxD-like"/>
    <property type="match status" value="1"/>
</dbReference>
<dbReference type="HAMAP" id="MF_00489">
    <property type="entry name" value="UPF0178"/>
    <property type="match status" value="1"/>
</dbReference>
<dbReference type="InterPro" id="IPR003791">
    <property type="entry name" value="UPF0178"/>
</dbReference>
<dbReference type="NCBIfam" id="NF001095">
    <property type="entry name" value="PRK00124.1"/>
    <property type="match status" value="1"/>
</dbReference>
<dbReference type="PANTHER" id="PTHR35146">
    <property type="entry name" value="UPF0178 PROTEIN YAII"/>
    <property type="match status" value="1"/>
</dbReference>
<dbReference type="PANTHER" id="PTHR35146:SF1">
    <property type="entry name" value="UPF0178 PROTEIN YAII"/>
    <property type="match status" value="1"/>
</dbReference>
<dbReference type="Pfam" id="PF02639">
    <property type="entry name" value="DUF188"/>
    <property type="match status" value="1"/>
</dbReference>
<evidence type="ECO:0000255" key="1">
    <source>
        <dbReference type="HAMAP-Rule" id="MF_00489"/>
    </source>
</evidence>